<organism>
    <name type="scientific">Yersinia pestis</name>
    <dbReference type="NCBI Taxonomy" id="632"/>
    <lineage>
        <taxon>Bacteria</taxon>
        <taxon>Pseudomonadati</taxon>
        <taxon>Pseudomonadota</taxon>
        <taxon>Gammaproteobacteria</taxon>
        <taxon>Enterobacterales</taxon>
        <taxon>Yersiniaceae</taxon>
        <taxon>Yersinia</taxon>
    </lineage>
</organism>
<reference key="1">
    <citation type="journal article" date="2001" name="Nature">
        <title>Genome sequence of Yersinia pestis, the causative agent of plague.</title>
        <authorList>
            <person name="Parkhill J."/>
            <person name="Wren B.W."/>
            <person name="Thomson N.R."/>
            <person name="Titball R.W."/>
            <person name="Holden M.T.G."/>
            <person name="Prentice M.B."/>
            <person name="Sebaihia M."/>
            <person name="James K.D."/>
            <person name="Churcher C.M."/>
            <person name="Mungall K.L."/>
            <person name="Baker S."/>
            <person name="Basham D."/>
            <person name="Bentley S.D."/>
            <person name="Brooks K."/>
            <person name="Cerdeno-Tarraga A.-M."/>
            <person name="Chillingworth T."/>
            <person name="Cronin A."/>
            <person name="Davies R.M."/>
            <person name="Davis P."/>
            <person name="Dougan G."/>
            <person name="Feltwell T."/>
            <person name="Hamlin N."/>
            <person name="Holroyd S."/>
            <person name="Jagels K."/>
            <person name="Karlyshev A.V."/>
            <person name="Leather S."/>
            <person name="Moule S."/>
            <person name="Oyston P.C.F."/>
            <person name="Quail M.A."/>
            <person name="Rutherford K.M."/>
            <person name="Simmonds M."/>
            <person name="Skelton J."/>
            <person name="Stevens K."/>
            <person name="Whitehead S."/>
            <person name="Barrell B.G."/>
        </authorList>
    </citation>
    <scope>NUCLEOTIDE SEQUENCE [LARGE SCALE GENOMIC DNA]</scope>
    <source>
        <strain>CO-92 / Biovar Orientalis</strain>
    </source>
</reference>
<reference key="2">
    <citation type="journal article" date="2002" name="J. Bacteriol.">
        <title>Genome sequence of Yersinia pestis KIM.</title>
        <authorList>
            <person name="Deng W."/>
            <person name="Burland V."/>
            <person name="Plunkett G. III"/>
            <person name="Boutin A."/>
            <person name="Mayhew G.F."/>
            <person name="Liss P."/>
            <person name="Perna N.T."/>
            <person name="Rose D.J."/>
            <person name="Mau B."/>
            <person name="Zhou S."/>
            <person name="Schwartz D.C."/>
            <person name="Fetherston J.D."/>
            <person name="Lindler L.E."/>
            <person name="Brubaker R.R."/>
            <person name="Plano G.V."/>
            <person name="Straley S.C."/>
            <person name="McDonough K.A."/>
            <person name="Nilles M.L."/>
            <person name="Matson J.S."/>
            <person name="Blattner F.R."/>
            <person name="Perry R.D."/>
        </authorList>
    </citation>
    <scope>NUCLEOTIDE SEQUENCE [LARGE SCALE GENOMIC DNA]</scope>
    <source>
        <strain>KIM10+ / Biovar Mediaevalis</strain>
    </source>
</reference>
<reference key="3">
    <citation type="journal article" date="2004" name="DNA Res.">
        <title>Complete genome sequence of Yersinia pestis strain 91001, an isolate avirulent to humans.</title>
        <authorList>
            <person name="Song Y."/>
            <person name="Tong Z."/>
            <person name="Wang J."/>
            <person name="Wang L."/>
            <person name="Guo Z."/>
            <person name="Han Y."/>
            <person name="Zhang J."/>
            <person name="Pei D."/>
            <person name="Zhou D."/>
            <person name="Qin H."/>
            <person name="Pang X."/>
            <person name="Han Y."/>
            <person name="Zhai J."/>
            <person name="Li M."/>
            <person name="Cui B."/>
            <person name="Qi Z."/>
            <person name="Jin L."/>
            <person name="Dai R."/>
            <person name="Chen F."/>
            <person name="Li S."/>
            <person name="Ye C."/>
            <person name="Du Z."/>
            <person name="Lin W."/>
            <person name="Wang J."/>
            <person name="Yu J."/>
            <person name="Yang H."/>
            <person name="Wang J."/>
            <person name="Huang P."/>
            <person name="Yang R."/>
        </authorList>
    </citation>
    <scope>NUCLEOTIDE SEQUENCE [LARGE SCALE GENOMIC DNA]</scope>
    <source>
        <strain>91001 / Biovar Mediaevalis</strain>
    </source>
</reference>
<comment type="subcellular location">
    <subcellularLocation>
        <location evidence="1">Secreted</location>
    </subcellularLocation>
</comment>
<comment type="similarity">
    <text evidence="1">Belongs to the YebF family.</text>
</comment>
<comment type="sequence caution" evidence="4">
    <conflict type="erroneous initiation">
        <sequence resource="EMBL-CDS" id="AAM86084"/>
    </conflict>
</comment>
<comment type="sequence caution" evidence="4">
    <conflict type="erroneous initiation">
        <sequence resource="EMBL-CDS" id="AAS61847"/>
    </conflict>
</comment>
<comment type="sequence caution" evidence="4">
    <conflict type="erroneous initiation">
        <sequence resource="EMBL-CDS" id="CAL20420"/>
    </conflict>
</comment>
<name>YEBF_YERPE</name>
<feature type="signal peptide" evidence="1">
    <location>
        <begin position="1"/>
        <end position="23"/>
    </location>
</feature>
<feature type="chain" id="PRO_0000045958" description="Protein YebF">
    <location>
        <begin position="24"/>
        <end position="136"/>
    </location>
</feature>
<feature type="domain" description="YebF/Cmi" evidence="2">
    <location>
        <begin position="30"/>
        <end position="117"/>
    </location>
</feature>
<feature type="region of interest" description="Disordered" evidence="3">
    <location>
        <begin position="117"/>
        <end position="136"/>
    </location>
</feature>
<feature type="disulfide bond" evidence="2">
    <location>
        <begin position="34"/>
        <end position="107"/>
    </location>
</feature>
<keyword id="KW-1015">Disulfide bond</keyword>
<keyword id="KW-1185">Reference proteome</keyword>
<keyword id="KW-0964">Secreted</keyword>
<keyword id="KW-0732">Signal</keyword>
<accession>Q8ZFD5</accession>
<accession>Q0WG12</accession>
<accession>Q74UT3</accession>
<accession>Q7CHW7</accession>
<evidence type="ECO:0000255" key="1">
    <source>
        <dbReference type="HAMAP-Rule" id="MF_01435"/>
    </source>
</evidence>
<evidence type="ECO:0000255" key="2">
    <source>
        <dbReference type="PROSITE-ProRule" id="PRU01323"/>
    </source>
</evidence>
<evidence type="ECO:0000256" key="3">
    <source>
        <dbReference type="SAM" id="MobiDB-lite"/>
    </source>
</evidence>
<evidence type="ECO:0000305" key="4"/>
<proteinExistence type="inferred from homology"/>
<sequence length="136" mass="14905">MKKTGLALVLATILLGMMGSVHAQEPRVVKVPACIGLNQSQVATQVKRDFLQNRIPRWEADKKQLGTDKPVVWINVVDIIGKDDIWQVPLIARGNKGDKTYQVVLDCKSGTMTYTGLNAQTRPDPQIGLNSQAGPK</sequence>
<gene>
    <name evidence="1" type="primary">yebF</name>
    <name type="ordered locus">YPO1779</name>
    <name type="ordered locus">y2528</name>
    <name type="ordered locus">YP_1614</name>
</gene>
<protein>
    <recommendedName>
        <fullName evidence="1">Protein YebF</fullName>
    </recommendedName>
</protein>
<dbReference type="EMBL" id="AL590842">
    <property type="protein sequence ID" value="CAL20420.1"/>
    <property type="status" value="ALT_INIT"/>
    <property type="molecule type" value="Genomic_DNA"/>
</dbReference>
<dbReference type="EMBL" id="AE009952">
    <property type="protein sequence ID" value="AAM86084.1"/>
    <property type="status" value="ALT_INIT"/>
    <property type="molecule type" value="Genomic_DNA"/>
</dbReference>
<dbReference type="EMBL" id="AE017042">
    <property type="protein sequence ID" value="AAS61847.1"/>
    <property type="status" value="ALT_INIT"/>
    <property type="molecule type" value="Genomic_DNA"/>
</dbReference>
<dbReference type="PIR" id="AI0216">
    <property type="entry name" value="AI0216"/>
</dbReference>
<dbReference type="RefSeq" id="YP_002346776.1">
    <property type="nucleotide sequence ID" value="NC_003143.1"/>
</dbReference>
<dbReference type="SMR" id="Q8ZFD5"/>
<dbReference type="STRING" id="214092.YPO1779"/>
<dbReference type="PaxDb" id="214092-YPO1779"/>
<dbReference type="EnsemblBacteria" id="AAS61847">
    <property type="protein sequence ID" value="AAS61847"/>
    <property type="gene ID" value="YP_1614"/>
</dbReference>
<dbReference type="KEGG" id="ype:YPO1779"/>
<dbReference type="KEGG" id="ypk:y2528"/>
<dbReference type="KEGG" id="ypm:YP_1614"/>
<dbReference type="PATRIC" id="fig|1028802.3.peg.1215"/>
<dbReference type="eggNOG" id="ENOG5032VY4">
    <property type="taxonomic scope" value="Bacteria"/>
</dbReference>
<dbReference type="HOGENOM" id="CLU_161319_1_0_6"/>
<dbReference type="Proteomes" id="UP000000815">
    <property type="component" value="Chromosome"/>
</dbReference>
<dbReference type="Proteomes" id="UP000001019">
    <property type="component" value="Chromosome"/>
</dbReference>
<dbReference type="Proteomes" id="UP000002490">
    <property type="component" value="Chromosome"/>
</dbReference>
<dbReference type="GO" id="GO:0005576">
    <property type="term" value="C:extracellular region"/>
    <property type="evidence" value="ECO:0007669"/>
    <property type="project" value="UniProtKB-SubCell"/>
</dbReference>
<dbReference type="Gene3D" id="3.10.450.300">
    <property type="entry name" value="YebF/Colicin-M immunity protein"/>
    <property type="match status" value="1"/>
</dbReference>
<dbReference type="HAMAP" id="MF_01435">
    <property type="entry name" value="YebF"/>
    <property type="match status" value="1"/>
</dbReference>
<dbReference type="InterPro" id="IPR020236">
    <property type="entry name" value="Uncharacterised_YebF"/>
</dbReference>
<dbReference type="InterPro" id="IPR038703">
    <property type="entry name" value="YebF/Cmi_sf"/>
</dbReference>
<dbReference type="InterPro" id="IPR025603">
    <property type="entry name" value="YebF/ColM_immunity"/>
</dbReference>
<dbReference type="NCBIfam" id="NF010224">
    <property type="entry name" value="PRK13680.1"/>
    <property type="match status" value="1"/>
</dbReference>
<dbReference type="NCBIfam" id="NF041240">
    <property type="entry name" value="YebF_not_Cmi"/>
    <property type="match status" value="1"/>
</dbReference>
<dbReference type="Pfam" id="PF13995">
    <property type="entry name" value="YebF"/>
    <property type="match status" value="1"/>
</dbReference>
<dbReference type="PROSITE" id="PS51979">
    <property type="entry name" value="YEBF_CMI"/>
    <property type="match status" value="1"/>
</dbReference>